<gene>
    <name evidence="1" type="primary">rplE</name>
    <name type="ordered locus">NMCC_1994</name>
</gene>
<organism>
    <name type="scientific">Neisseria meningitidis serogroup C (strain 053442)</name>
    <dbReference type="NCBI Taxonomy" id="374833"/>
    <lineage>
        <taxon>Bacteria</taxon>
        <taxon>Pseudomonadati</taxon>
        <taxon>Pseudomonadota</taxon>
        <taxon>Betaproteobacteria</taxon>
        <taxon>Neisseriales</taxon>
        <taxon>Neisseriaceae</taxon>
        <taxon>Neisseria</taxon>
    </lineage>
</organism>
<keyword id="KW-0687">Ribonucleoprotein</keyword>
<keyword id="KW-0689">Ribosomal protein</keyword>
<keyword id="KW-0694">RNA-binding</keyword>
<keyword id="KW-0699">rRNA-binding</keyword>
<keyword id="KW-0820">tRNA-binding</keyword>
<sequence length="179" mass="20323">MARLREFYKETVVPELVKQFGYKSVMEVPRIEKITLNMGVGEAVADKKVMEHAVSDLEKIAGQKPVVTVARKSIAGFKIRDNYPVGCKVTLRRDQMFEFLDRLITIALPRVRDFRGVSGKSFDGRGNYNMGVREQIIFPEIEYDKIDALRGLNITITTTAKTDEEAKALLSLFKFPFKG</sequence>
<comment type="function">
    <text evidence="1">This is one of the proteins that bind and probably mediate the attachment of the 5S RNA into the large ribosomal subunit, where it forms part of the central protuberance. In the 70S ribosome it contacts protein S13 of the 30S subunit (bridge B1b), connecting the 2 subunits; this bridge is implicated in subunit movement. Contacts the P site tRNA; the 5S rRNA and some of its associated proteins might help stabilize positioning of ribosome-bound tRNAs.</text>
</comment>
<comment type="subunit">
    <text evidence="1">Part of the 50S ribosomal subunit; part of the 5S rRNA/L5/L18/L25 subcomplex. Contacts the 5S rRNA and the P site tRNA. Forms a bridge to the 30S subunit in the 70S ribosome.</text>
</comment>
<comment type="similarity">
    <text evidence="1">Belongs to the universal ribosomal protein uL5 family.</text>
</comment>
<reference key="1">
    <citation type="journal article" date="2008" name="Genomics">
        <title>Characterization of ST-4821 complex, a unique Neisseria meningitidis clone.</title>
        <authorList>
            <person name="Peng J."/>
            <person name="Yang L."/>
            <person name="Yang F."/>
            <person name="Yang J."/>
            <person name="Yan Y."/>
            <person name="Nie H."/>
            <person name="Zhang X."/>
            <person name="Xiong Z."/>
            <person name="Jiang Y."/>
            <person name="Cheng F."/>
            <person name="Xu X."/>
            <person name="Chen S."/>
            <person name="Sun L."/>
            <person name="Li W."/>
            <person name="Shen Y."/>
            <person name="Shao Z."/>
            <person name="Liang X."/>
            <person name="Xu J."/>
            <person name="Jin Q."/>
        </authorList>
    </citation>
    <scope>NUCLEOTIDE SEQUENCE [LARGE SCALE GENOMIC DNA]</scope>
    <source>
        <strain>053442</strain>
    </source>
</reference>
<dbReference type="EMBL" id="CP000381">
    <property type="protein sequence ID" value="ABX74117.1"/>
    <property type="molecule type" value="Genomic_DNA"/>
</dbReference>
<dbReference type="RefSeq" id="WP_002215436.1">
    <property type="nucleotide sequence ID" value="NC_010120.1"/>
</dbReference>
<dbReference type="SMR" id="A9M3V4"/>
<dbReference type="KEGG" id="nmn:NMCC_1994"/>
<dbReference type="HOGENOM" id="CLU_061015_2_1_4"/>
<dbReference type="Proteomes" id="UP000001177">
    <property type="component" value="Chromosome"/>
</dbReference>
<dbReference type="GO" id="GO:1990904">
    <property type="term" value="C:ribonucleoprotein complex"/>
    <property type="evidence" value="ECO:0007669"/>
    <property type="project" value="UniProtKB-KW"/>
</dbReference>
<dbReference type="GO" id="GO:0005840">
    <property type="term" value="C:ribosome"/>
    <property type="evidence" value="ECO:0007669"/>
    <property type="project" value="UniProtKB-KW"/>
</dbReference>
<dbReference type="GO" id="GO:0019843">
    <property type="term" value="F:rRNA binding"/>
    <property type="evidence" value="ECO:0007669"/>
    <property type="project" value="UniProtKB-UniRule"/>
</dbReference>
<dbReference type="GO" id="GO:0003735">
    <property type="term" value="F:structural constituent of ribosome"/>
    <property type="evidence" value="ECO:0007669"/>
    <property type="project" value="InterPro"/>
</dbReference>
<dbReference type="GO" id="GO:0000049">
    <property type="term" value="F:tRNA binding"/>
    <property type="evidence" value="ECO:0007669"/>
    <property type="project" value="UniProtKB-UniRule"/>
</dbReference>
<dbReference type="GO" id="GO:0006412">
    <property type="term" value="P:translation"/>
    <property type="evidence" value="ECO:0007669"/>
    <property type="project" value="UniProtKB-UniRule"/>
</dbReference>
<dbReference type="FunFam" id="3.30.1440.10:FF:000001">
    <property type="entry name" value="50S ribosomal protein L5"/>
    <property type="match status" value="1"/>
</dbReference>
<dbReference type="Gene3D" id="3.30.1440.10">
    <property type="match status" value="1"/>
</dbReference>
<dbReference type="HAMAP" id="MF_01333_B">
    <property type="entry name" value="Ribosomal_uL5_B"/>
    <property type="match status" value="1"/>
</dbReference>
<dbReference type="InterPro" id="IPR002132">
    <property type="entry name" value="Ribosomal_uL5"/>
</dbReference>
<dbReference type="InterPro" id="IPR020930">
    <property type="entry name" value="Ribosomal_uL5_bac-type"/>
</dbReference>
<dbReference type="InterPro" id="IPR031309">
    <property type="entry name" value="Ribosomal_uL5_C"/>
</dbReference>
<dbReference type="InterPro" id="IPR020929">
    <property type="entry name" value="Ribosomal_uL5_CS"/>
</dbReference>
<dbReference type="InterPro" id="IPR022803">
    <property type="entry name" value="Ribosomal_uL5_dom_sf"/>
</dbReference>
<dbReference type="InterPro" id="IPR031310">
    <property type="entry name" value="Ribosomal_uL5_N"/>
</dbReference>
<dbReference type="NCBIfam" id="NF000585">
    <property type="entry name" value="PRK00010.1"/>
    <property type="match status" value="1"/>
</dbReference>
<dbReference type="PANTHER" id="PTHR11994">
    <property type="entry name" value="60S RIBOSOMAL PROTEIN L11-RELATED"/>
    <property type="match status" value="1"/>
</dbReference>
<dbReference type="Pfam" id="PF00281">
    <property type="entry name" value="Ribosomal_L5"/>
    <property type="match status" value="1"/>
</dbReference>
<dbReference type="Pfam" id="PF00673">
    <property type="entry name" value="Ribosomal_L5_C"/>
    <property type="match status" value="1"/>
</dbReference>
<dbReference type="PIRSF" id="PIRSF002161">
    <property type="entry name" value="Ribosomal_L5"/>
    <property type="match status" value="1"/>
</dbReference>
<dbReference type="SUPFAM" id="SSF55282">
    <property type="entry name" value="RL5-like"/>
    <property type="match status" value="1"/>
</dbReference>
<dbReference type="PROSITE" id="PS00358">
    <property type="entry name" value="RIBOSOMAL_L5"/>
    <property type="match status" value="1"/>
</dbReference>
<accession>A9M3V4</accession>
<feature type="chain" id="PRO_1000086599" description="Large ribosomal subunit protein uL5">
    <location>
        <begin position="1"/>
        <end position="179"/>
    </location>
</feature>
<name>RL5_NEIM0</name>
<evidence type="ECO:0000255" key="1">
    <source>
        <dbReference type="HAMAP-Rule" id="MF_01333"/>
    </source>
</evidence>
<evidence type="ECO:0000305" key="2"/>
<proteinExistence type="inferred from homology"/>
<protein>
    <recommendedName>
        <fullName evidence="1">Large ribosomal subunit protein uL5</fullName>
    </recommendedName>
    <alternativeName>
        <fullName evidence="2">50S ribosomal protein L5</fullName>
    </alternativeName>
</protein>